<gene>
    <name type="primary">TES</name>
</gene>
<comment type="function">
    <text evidence="1">Scaffold protein that may play a role in cell adhesion, cell spreading and in the reorganization of the actin cytoskeleton. Plays a role in the regulation of cell proliferation. May act as a tumor suppressor (By similarity).</text>
</comment>
<comment type="subunit">
    <text evidence="1">Interacts via LIM domain 1 with ZYX. Interacts (via LIM domain 3) with ENAH and VASP. Interacts with ALKBH4, talin, actin, alpha-actinin, GRIP1 and PXN (By similarity). Interacts (via LIM domain 2) with ACTL7A (via N-terminus). Heterodimer with ACTL7A; the heterodimer interacts with ENAH to form a heterotrimer (By similarity).</text>
</comment>
<comment type="subcellular location">
    <subcellularLocation>
        <location evidence="1">Cytoplasm</location>
    </subcellularLocation>
    <subcellularLocation>
        <location evidence="1">Cell junction</location>
        <location evidence="1">Focal adhesion</location>
    </subcellularLocation>
    <text evidence="1">Detected along actin stress fibers.</text>
</comment>
<comment type="domain">
    <text evidence="1">The N-terminal and the C-terminal halves of the protein can associate with each other, thereby hindering interactions with ZYX.</text>
</comment>
<comment type="similarity">
    <text evidence="5">Belongs to the prickle / espinas / testin family.</text>
</comment>
<proteinExistence type="inferred from homology"/>
<dbReference type="EMBL" id="DP000233">
    <property type="protein sequence ID" value="ABK34428.1"/>
    <property type="molecule type" value="Genomic_DNA"/>
</dbReference>
<dbReference type="RefSeq" id="NP_001162184.1">
    <property type="nucleotide sequence ID" value="NM_001168713.1"/>
</dbReference>
<dbReference type="SMR" id="A0M8R4"/>
<dbReference type="STRING" id="9555.ENSPANP00000016607"/>
<dbReference type="Ensembl" id="ENSPANT00000006264.4">
    <property type="protein sequence ID" value="ENSPANP00000016607.3"/>
    <property type="gene ID" value="ENSPANG00000008934.4"/>
</dbReference>
<dbReference type="GeneID" id="100126668"/>
<dbReference type="KEGG" id="panu:100126668"/>
<dbReference type="CTD" id="26136"/>
<dbReference type="eggNOG" id="KOG1704">
    <property type="taxonomic scope" value="Eukaryota"/>
</dbReference>
<dbReference type="GeneTree" id="ENSGT00940000155993"/>
<dbReference type="OMA" id="PHMGPHS"/>
<dbReference type="OrthoDB" id="96at314294"/>
<dbReference type="Proteomes" id="UP000028761">
    <property type="component" value="Chromosome 4"/>
</dbReference>
<dbReference type="GO" id="GO:0005737">
    <property type="term" value="C:cytoplasm"/>
    <property type="evidence" value="ECO:0000250"/>
    <property type="project" value="UniProtKB"/>
</dbReference>
<dbReference type="GO" id="GO:0005829">
    <property type="term" value="C:cytosol"/>
    <property type="evidence" value="ECO:0007669"/>
    <property type="project" value="Ensembl"/>
</dbReference>
<dbReference type="GO" id="GO:0005925">
    <property type="term" value="C:focal adhesion"/>
    <property type="evidence" value="ECO:0007669"/>
    <property type="project" value="UniProtKB-SubCell"/>
</dbReference>
<dbReference type="GO" id="GO:0005886">
    <property type="term" value="C:plasma membrane"/>
    <property type="evidence" value="ECO:0007669"/>
    <property type="project" value="Ensembl"/>
</dbReference>
<dbReference type="GO" id="GO:0032991">
    <property type="term" value="C:protein-containing complex"/>
    <property type="evidence" value="ECO:0007669"/>
    <property type="project" value="Ensembl"/>
</dbReference>
<dbReference type="GO" id="GO:0008270">
    <property type="term" value="F:zinc ion binding"/>
    <property type="evidence" value="ECO:0000250"/>
    <property type="project" value="UniProtKB"/>
</dbReference>
<dbReference type="GO" id="GO:0008285">
    <property type="term" value="P:negative regulation of cell population proliferation"/>
    <property type="evidence" value="ECO:0000250"/>
    <property type="project" value="UniProtKB"/>
</dbReference>
<dbReference type="CDD" id="cd09413">
    <property type="entry name" value="LIM1_Testin"/>
    <property type="match status" value="1"/>
</dbReference>
<dbReference type="CDD" id="cd09416">
    <property type="entry name" value="LIM2_Testin"/>
    <property type="match status" value="1"/>
</dbReference>
<dbReference type="CDD" id="cd09419">
    <property type="entry name" value="LIM3_Testin"/>
    <property type="match status" value="1"/>
</dbReference>
<dbReference type="CDD" id="cd09829">
    <property type="entry name" value="PET_testin"/>
    <property type="match status" value="1"/>
</dbReference>
<dbReference type="FunFam" id="2.10.110.10:FF:000061">
    <property type="entry name" value="Testin"/>
    <property type="match status" value="1"/>
</dbReference>
<dbReference type="FunFam" id="2.10.110.10:FF:000065">
    <property type="entry name" value="Testin"/>
    <property type="match status" value="1"/>
</dbReference>
<dbReference type="FunFam" id="2.10.110.10:FF:000005">
    <property type="entry name" value="Testin isoform 1"/>
    <property type="match status" value="1"/>
</dbReference>
<dbReference type="Gene3D" id="2.10.110.10">
    <property type="entry name" value="Cysteine Rich Protein"/>
    <property type="match status" value="3"/>
</dbReference>
<dbReference type="InterPro" id="IPR034958">
    <property type="entry name" value="LIM1_Testin"/>
</dbReference>
<dbReference type="InterPro" id="IPR034959">
    <property type="entry name" value="LIM2_Testin"/>
</dbReference>
<dbReference type="InterPro" id="IPR034960">
    <property type="entry name" value="LIM3_Testin"/>
</dbReference>
<dbReference type="InterPro" id="IPR010442">
    <property type="entry name" value="PET_domain"/>
</dbReference>
<dbReference type="InterPro" id="IPR033724">
    <property type="entry name" value="PET_testin"/>
</dbReference>
<dbReference type="InterPro" id="IPR047120">
    <property type="entry name" value="Pk/Esn/Tes"/>
</dbReference>
<dbReference type="InterPro" id="IPR001781">
    <property type="entry name" value="Znf_LIM"/>
</dbReference>
<dbReference type="PANTHER" id="PTHR24211">
    <property type="entry name" value="LIM DOMAIN-CONTAINING PROTEIN"/>
    <property type="match status" value="1"/>
</dbReference>
<dbReference type="PANTHER" id="PTHR24211:SF1">
    <property type="entry name" value="TESTIN"/>
    <property type="match status" value="1"/>
</dbReference>
<dbReference type="Pfam" id="PF00412">
    <property type="entry name" value="LIM"/>
    <property type="match status" value="3"/>
</dbReference>
<dbReference type="Pfam" id="PF06297">
    <property type="entry name" value="PET"/>
    <property type="match status" value="1"/>
</dbReference>
<dbReference type="SMART" id="SM00132">
    <property type="entry name" value="LIM"/>
    <property type="match status" value="3"/>
</dbReference>
<dbReference type="SUPFAM" id="SSF57716">
    <property type="entry name" value="Glucocorticoid receptor-like (DNA-binding domain)"/>
    <property type="match status" value="2"/>
</dbReference>
<dbReference type="PROSITE" id="PS00478">
    <property type="entry name" value="LIM_DOMAIN_1"/>
    <property type="match status" value="2"/>
</dbReference>
<dbReference type="PROSITE" id="PS50023">
    <property type="entry name" value="LIM_DOMAIN_2"/>
    <property type="match status" value="3"/>
</dbReference>
<dbReference type="PROSITE" id="PS51303">
    <property type="entry name" value="PET"/>
    <property type="match status" value="1"/>
</dbReference>
<keyword id="KW-0965">Cell junction</keyword>
<keyword id="KW-0963">Cytoplasm</keyword>
<keyword id="KW-0440">LIM domain</keyword>
<keyword id="KW-0479">Metal-binding</keyword>
<keyword id="KW-1185">Reference proteome</keyword>
<keyword id="KW-0677">Repeat</keyword>
<keyword id="KW-0862">Zinc</keyword>
<reference key="1">
    <citation type="journal article" date="2003" name="Nature">
        <title>Comparative analyses of multi-species sequences from targeted genomic regions.</title>
        <authorList>
            <person name="Thomas J.W."/>
            <person name="Touchman J.W."/>
            <person name="Blakesley R.W."/>
            <person name="Bouffard G.G."/>
            <person name="Beckstrom-Sternberg S.M."/>
            <person name="Margulies E.H."/>
            <person name="Blanchette M."/>
            <person name="Siepel A.C."/>
            <person name="Thomas P.J."/>
            <person name="McDowell J.C."/>
            <person name="Maskeri B."/>
            <person name="Hansen N.F."/>
            <person name="Schwartz M.S."/>
            <person name="Weber R.J."/>
            <person name="Kent W.J."/>
            <person name="Karolchik D."/>
            <person name="Bruen T.C."/>
            <person name="Bevan R."/>
            <person name="Cutler D.J."/>
            <person name="Schwartz S."/>
            <person name="Elnitski L."/>
            <person name="Idol J.R."/>
            <person name="Prasad A.B."/>
            <person name="Lee-Lin S.-Q."/>
            <person name="Maduro V.V.B."/>
            <person name="Summers T.J."/>
            <person name="Portnoy M.E."/>
            <person name="Dietrich N.L."/>
            <person name="Akhter N."/>
            <person name="Ayele K."/>
            <person name="Benjamin B."/>
            <person name="Cariaga K."/>
            <person name="Brinkley C.P."/>
            <person name="Brooks S.Y."/>
            <person name="Granite S."/>
            <person name="Guan X."/>
            <person name="Gupta J."/>
            <person name="Haghighi P."/>
            <person name="Ho S.-L."/>
            <person name="Huang M.C."/>
            <person name="Karlins E."/>
            <person name="Laric P.L."/>
            <person name="Legaspi R."/>
            <person name="Lim M.J."/>
            <person name="Maduro Q.L."/>
            <person name="Masiello C.A."/>
            <person name="Mastrian S.D."/>
            <person name="McCloskey J.C."/>
            <person name="Pearson R."/>
            <person name="Stantripop S."/>
            <person name="Tiongson E.E."/>
            <person name="Tran J.T."/>
            <person name="Tsurgeon C."/>
            <person name="Vogt J.L."/>
            <person name="Walker M.A."/>
            <person name="Wetherby K.D."/>
            <person name="Wiggins L.S."/>
            <person name="Young A.C."/>
            <person name="Zhang L.-H."/>
            <person name="Osoegawa K."/>
            <person name="Zhu B."/>
            <person name="Zhao B."/>
            <person name="Shu C.L."/>
            <person name="De Jong P.J."/>
            <person name="Lawrence C.E."/>
            <person name="Smit A.F."/>
            <person name="Chakravarti A."/>
            <person name="Haussler D."/>
            <person name="Green P."/>
            <person name="Miller W."/>
            <person name="Green E.D."/>
        </authorList>
    </citation>
    <scope>NUCLEOTIDE SEQUENCE [LARGE SCALE GENOMIC DNA]</scope>
</reference>
<feature type="chain" id="PRO_0000278800" description="Testin">
    <location>
        <begin position="1"/>
        <end position="421"/>
    </location>
</feature>
<feature type="domain" description="PET" evidence="3">
    <location>
        <begin position="92"/>
        <end position="199"/>
    </location>
</feature>
<feature type="domain" description="LIM zinc-binding 1" evidence="2">
    <location>
        <begin position="234"/>
        <end position="297"/>
    </location>
</feature>
<feature type="domain" description="LIM zinc-binding 2" evidence="2">
    <location>
        <begin position="299"/>
        <end position="359"/>
    </location>
</feature>
<feature type="domain" description="LIM zinc-binding 3" evidence="2">
    <location>
        <begin position="362"/>
        <end position="421"/>
    </location>
</feature>
<feature type="region of interest" description="Disordered" evidence="4">
    <location>
        <begin position="133"/>
        <end position="164"/>
    </location>
</feature>
<feature type="compositionally biased region" description="Basic and acidic residues" evidence="4">
    <location>
        <begin position="155"/>
        <end position="164"/>
    </location>
</feature>
<sequence length="421" mass="47957">MDLENKVKKMGLGHEQGFGAPCLKCKEKCEGFELHFWRKICRNCKCGQEEHDVLLSNEEDRKVGKLFEDTKYTTLIAKLKSDGIPMYKRNVMILTNPVAAKKNVSINTVTYEWAPPVQNQALARQYMQMLPKEKQPVAGSEGAQYRKKQLAKQLPAHDQDPSKCHELSPREVKEMEQFVKKYKSEALGVGDVKLPCEMDAQGPKQMNIPGGDRSTPAAVGAMEDKSAEHKRTQYSCYCCKLSMKEGDPAIYAERAGYDKLWHPACFVCSTCHELLVDMIYFWKNEKLYCGRHYCDSEKPRCAGCDELIFSNEYTQAENQNWHLKHFCCFDCDSILAGEIYVMVNDKPVCKPCYVKNHAVVCQGCHNAIDPEVQRVSYNNFSWHASTECFLCSCCSKCLIGQKFMPVEGMVFCSVECKKMMS</sequence>
<name>TES_PAPAN</name>
<accession>A0M8R4</accession>
<protein>
    <recommendedName>
        <fullName>Testin</fullName>
    </recommendedName>
</protein>
<organism>
    <name type="scientific">Papio anubis</name>
    <name type="common">Olive baboon</name>
    <dbReference type="NCBI Taxonomy" id="9555"/>
    <lineage>
        <taxon>Eukaryota</taxon>
        <taxon>Metazoa</taxon>
        <taxon>Chordata</taxon>
        <taxon>Craniata</taxon>
        <taxon>Vertebrata</taxon>
        <taxon>Euteleostomi</taxon>
        <taxon>Mammalia</taxon>
        <taxon>Eutheria</taxon>
        <taxon>Euarchontoglires</taxon>
        <taxon>Primates</taxon>
        <taxon>Haplorrhini</taxon>
        <taxon>Catarrhini</taxon>
        <taxon>Cercopithecidae</taxon>
        <taxon>Cercopithecinae</taxon>
        <taxon>Papio</taxon>
    </lineage>
</organism>
<evidence type="ECO:0000250" key="1"/>
<evidence type="ECO:0000255" key="2">
    <source>
        <dbReference type="PROSITE-ProRule" id="PRU00125"/>
    </source>
</evidence>
<evidence type="ECO:0000255" key="3">
    <source>
        <dbReference type="PROSITE-ProRule" id="PRU00636"/>
    </source>
</evidence>
<evidence type="ECO:0000256" key="4">
    <source>
        <dbReference type="SAM" id="MobiDB-lite"/>
    </source>
</evidence>
<evidence type="ECO:0000305" key="5"/>